<sequence length="814" mass="89626">MAIKKLLIASLLFSSATVYGADGFVVKDIHFEGLQRVAVGAALLSMPVRVGDTIGDDDIGNTIRALFATGNFEDVRVLRDGETLIVQVKERPTIASVTFSGNKSVKDDMLKENLEASGVRVGEALDRTALTSIEKGLEDFYYSVGKYSASVKAVVTPLPRNRVDLKLVFTEGVSAKIQQINIVGNKAFSSDELISRFQLRDEVPWWNVVGDRKYQKQKLSGDLETLRSFYLDRGYARFNIDSTQVSLTPDKKGIYITINMTEGEQYKLSGVAVKGNLAGHSAEIEGLTKVEPGELYNGTKVTRMEEDIKKLLGRYGYAYPRVVTQPEINDADKTVRLNINVDAGNRFYVRHVRFDGNDTSKDTVLRREMRQMEGAWLGNDLVEQGKERLNRLGYFESVEVETQRVPGVADQVDVTYKVKERNTGTFNFGVGFGTESGVSFQAGVQQDNWLGTGNSVGISGTKNDYQTYVELSLTDPYFTVDGVSLGGRVFYNKFEASDADLSDYTNVSYGVGSTLGFPINENNSLRVGLDYVHNDLSDMRPQVSMWRYLDSVGVNPSVVGENVKSSADFKANDFFLNTGWSYNNLDRGYFPTKGTRASANAKIAVPGSDNEYYKLTFDSASYYPLTESGKWVVMGRTRAGFADGIGSKEVPFYDNFYAGGSSTVRGFQSNTIGPKAAYYKCPANLVGSGFNSYSGCPIDSTNMDDAVGGNAMAVLSAELIVPTPFISDKYANSVRTSFFVDGGTVWDTNWENTAETLKAGVPDYGKATNFRVSSGIALQWMSPLGPLVFSYAQPVKKYDGDKSEQFQFNIGKTW</sequence>
<keyword id="KW-0998">Cell outer membrane</keyword>
<keyword id="KW-0472">Membrane</keyword>
<keyword id="KW-1185">Reference proteome</keyword>
<keyword id="KW-0677">Repeat</keyword>
<keyword id="KW-0732">Signal</keyword>
<keyword id="KW-0812">Transmembrane</keyword>
<keyword id="KW-1134">Transmembrane beta strand</keyword>
<feature type="signal peptide" evidence="1">
    <location>
        <begin position="1"/>
        <end position="20"/>
    </location>
</feature>
<feature type="chain" id="PRO_0000045371" description="Outer membrane protein assembly factor BamA">
    <location>
        <begin position="21"/>
        <end position="814"/>
    </location>
</feature>
<feature type="domain" description="POTRA 1" evidence="2">
    <location>
        <begin position="24"/>
        <end position="91"/>
    </location>
</feature>
<feature type="domain" description="POTRA 2" evidence="2">
    <location>
        <begin position="92"/>
        <end position="172"/>
    </location>
</feature>
<feature type="domain" description="POTRA 3" evidence="2">
    <location>
        <begin position="175"/>
        <end position="263"/>
    </location>
</feature>
<feature type="domain" description="POTRA 4" evidence="2">
    <location>
        <begin position="266"/>
        <end position="344"/>
    </location>
</feature>
<feature type="domain" description="POTRA 5" evidence="2">
    <location>
        <begin position="347"/>
        <end position="421"/>
    </location>
</feature>
<accession>Q6D8D5</accession>
<dbReference type="EMBL" id="BX950851">
    <property type="protein sequence ID" value="CAG73950.1"/>
    <property type="molecule type" value="Genomic_DNA"/>
</dbReference>
<dbReference type="RefSeq" id="WP_011092637.1">
    <property type="nucleotide sequence ID" value="NC_004547.2"/>
</dbReference>
<dbReference type="SMR" id="Q6D8D5"/>
<dbReference type="STRING" id="218491.ECA1039"/>
<dbReference type="GeneID" id="57207868"/>
<dbReference type="KEGG" id="eca:ECA1039"/>
<dbReference type="PATRIC" id="fig|218491.5.peg.1047"/>
<dbReference type="eggNOG" id="COG4775">
    <property type="taxonomic scope" value="Bacteria"/>
</dbReference>
<dbReference type="HOGENOM" id="CLU_007664_1_0_6"/>
<dbReference type="OrthoDB" id="9803054at2"/>
<dbReference type="Proteomes" id="UP000007966">
    <property type="component" value="Chromosome"/>
</dbReference>
<dbReference type="GO" id="GO:1990063">
    <property type="term" value="C:Bam protein complex"/>
    <property type="evidence" value="ECO:0007669"/>
    <property type="project" value="TreeGrafter"/>
</dbReference>
<dbReference type="GO" id="GO:0043165">
    <property type="term" value="P:Gram-negative-bacterium-type cell outer membrane assembly"/>
    <property type="evidence" value="ECO:0007669"/>
    <property type="project" value="UniProtKB-UniRule"/>
</dbReference>
<dbReference type="GO" id="GO:0051205">
    <property type="term" value="P:protein insertion into membrane"/>
    <property type="evidence" value="ECO:0007669"/>
    <property type="project" value="UniProtKB-UniRule"/>
</dbReference>
<dbReference type="FunFam" id="2.40.160.50:FF:000001">
    <property type="entry name" value="Outer membrane protein assembly factor BamA"/>
    <property type="match status" value="1"/>
</dbReference>
<dbReference type="FunFam" id="3.10.20.310:FF:000001">
    <property type="entry name" value="Outer membrane protein assembly factor BamA"/>
    <property type="match status" value="1"/>
</dbReference>
<dbReference type="FunFam" id="3.10.20.310:FF:000002">
    <property type="entry name" value="Outer membrane protein assembly factor BamA"/>
    <property type="match status" value="1"/>
</dbReference>
<dbReference type="FunFam" id="3.10.20.310:FF:000003">
    <property type="entry name" value="Outer membrane protein assembly factor BamA"/>
    <property type="match status" value="1"/>
</dbReference>
<dbReference type="FunFam" id="3.10.20.310:FF:000004">
    <property type="entry name" value="Outer membrane protein assembly factor BamA"/>
    <property type="match status" value="1"/>
</dbReference>
<dbReference type="FunFam" id="3.10.20.310:FF:000005">
    <property type="entry name" value="Outer membrane protein assembly factor BamA"/>
    <property type="match status" value="1"/>
</dbReference>
<dbReference type="Gene3D" id="3.10.20.310">
    <property type="entry name" value="membrane protein fhac"/>
    <property type="match status" value="5"/>
</dbReference>
<dbReference type="Gene3D" id="2.40.160.50">
    <property type="entry name" value="membrane protein fhac: a member of the omp85/tpsb transporter family"/>
    <property type="match status" value="1"/>
</dbReference>
<dbReference type="HAMAP" id="MF_01430">
    <property type="entry name" value="OM_assembly_BamA"/>
    <property type="match status" value="1"/>
</dbReference>
<dbReference type="InterPro" id="IPR000184">
    <property type="entry name" value="Bac_surfAg_D15"/>
</dbReference>
<dbReference type="InterPro" id="IPR010827">
    <property type="entry name" value="BamA/TamA_POTRA"/>
</dbReference>
<dbReference type="InterPro" id="IPR039910">
    <property type="entry name" value="D15-like"/>
</dbReference>
<dbReference type="InterPro" id="IPR023707">
    <property type="entry name" value="OM_assembly_BamA"/>
</dbReference>
<dbReference type="InterPro" id="IPR034746">
    <property type="entry name" value="POTRA"/>
</dbReference>
<dbReference type="NCBIfam" id="TIGR03303">
    <property type="entry name" value="OM_YaeT"/>
    <property type="match status" value="1"/>
</dbReference>
<dbReference type="NCBIfam" id="NF008287">
    <property type="entry name" value="PRK11067.1"/>
    <property type="match status" value="1"/>
</dbReference>
<dbReference type="PANTHER" id="PTHR12815:SF23">
    <property type="entry name" value="OUTER MEMBRANE PROTEIN ASSEMBLY FACTOR BAMA"/>
    <property type="match status" value="1"/>
</dbReference>
<dbReference type="PANTHER" id="PTHR12815">
    <property type="entry name" value="SORTING AND ASSEMBLY MACHINERY SAMM50 PROTEIN FAMILY MEMBER"/>
    <property type="match status" value="1"/>
</dbReference>
<dbReference type="Pfam" id="PF01103">
    <property type="entry name" value="Omp85"/>
    <property type="match status" value="1"/>
</dbReference>
<dbReference type="Pfam" id="PF07244">
    <property type="entry name" value="POTRA"/>
    <property type="match status" value="4"/>
</dbReference>
<dbReference type="PIRSF" id="PIRSF006076">
    <property type="entry name" value="OM_assembly_OMP85"/>
    <property type="match status" value="1"/>
</dbReference>
<dbReference type="PROSITE" id="PS51779">
    <property type="entry name" value="POTRA"/>
    <property type="match status" value="5"/>
</dbReference>
<comment type="function">
    <text evidence="1">Part of the outer membrane protein assembly complex, which is involved in assembly and insertion of beta-barrel proteins into the outer membrane. Constitutes, with BamD, the core component of the assembly machinery.</text>
</comment>
<comment type="subunit">
    <text evidence="1">Part of the Bam complex, which is composed of the outer membrane protein BamA, and four lipoproteins BamB, BamC, BamD and BamE.</text>
</comment>
<comment type="subcellular location">
    <subcellularLocation>
        <location evidence="1">Cell outer membrane</location>
    </subcellularLocation>
</comment>
<comment type="similarity">
    <text evidence="1">Belongs to the BamA family.</text>
</comment>
<organism>
    <name type="scientific">Pectobacterium atrosepticum (strain SCRI 1043 / ATCC BAA-672)</name>
    <name type="common">Erwinia carotovora subsp. atroseptica</name>
    <dbReference type="NCBI Taxonomy" id="218491"/>
    <lineage>
        <taxon>Bacteria</taxon>
        <taxon>Pseudomonadati</taxon>
        <taxon>Pseudomonadota</taxon>
        <taxon>Gammaproteobacteria</taxon>
        <taxon>Enterobacterales</taxon>
        <taxon>Pectobacteriaceae</taxon>
        <taxon>Pectobacterium</taxon>
    </lineage>
</organism>
<evidence type="ECO:0000255" key="1">
    <source>
        <dbReference type="HAMAP-Rule" id="MF_01430"/>
    </source>
</evidence>
<evidence type="ECO:0000255" key="2">
    <source>
        <dbReference type="PROSITE-ProRule" id="PRU01115"/>
    </source>
</evidence>
<reference key="1">
    <citation type="journal article" date="2004" name="Proc. Natl. Acad. Sci. U.S.A.">
        <title>Genome sequence of the enterobacterial phytopathogen Erwinia carotovora subsp. atroseptica and characterization of virulence factors.</title>
        <authorList>
            <person name="Bell K.S."/>
            <person name="Sebaihia M."/>
            <person name="Pritchard L."/>
            <person name="Holden M.T.G."/>
            <person name="Hyman L.J."/>
            <person name="Holeva M.C."/>
            <person name="Thomson N.R."/>
            <person name="Bentley S.D."/>
            <person name="Churcher L.J.C."/>
            <person name="Mungall K."/>
            <person name="Atkin R."/>
            <person name="Bason N."/>
            <person name="Brooks K."/>
            <person name="Chillingworth T."/>
            <person name="Clark K."/>
            <person name="Doggett J."/>
            <person name="Fraser A."/>
            <person name="Hance Z."/>
            <person name="Hauser H."/>
            <person name="Jagels K."/>
            <person name="Moule S."/>
            <person name="Norbertczak H."/>
            <person name="Ormond D."/>
            <person name="Price C."/>
            <person name="Quail M.A."/>
            <person name="Sanders M."/>
            <person name="Walker D."/>
            <person name="Whitehead S."/>
            <person name="Salmond G.P.C."/>
            <person name="Birch P.R.J."/>
            <person name="Parkhill J."/>
            <person name="Toth I.K."/>
        </authorList>
    </citation>
    <scope>NUCLEOTIDE SEQUENCE [LARGE SCALE GENOMIC DNA]</scope>
    <source>
        <strain>SCRI 1043 / ATCC BAA-672</strain>
    </source>
</reference>
<gene>
    <name evidence="1" type="primary">bamA</name>
    <name type="synonym">yaeT</name>
    <name type="ordered locus">ECA1039</name>
</gene>
<protein>
    <recommendedName>
        <fullName evidence="1">Outer membrane protein assembly factor BamA</fullName>
    </recommendedName>
</protein>
<name>BAMA_PECAS</name>
<proteinExistence type="inferred from homology"/>